<dbReference type="EMBL" id="CP000478">
    <property type="protein sequence ID" value="ABK19323.1"/>
    <property type="molecule type" value="Genomic_DNA"/>
</dbReference>
<dbReference type="SMR" id="A0LPH1"/>
<dbReference type="STRING" id="335543.Sfum_3653"/>
<dbReference type="KEGG" id="sfu:Sfum_3653"/>
<dbReference type="eggNOG" id="COG1825">
    <property type="taxonomic scope" value="Bacteria"/>
</dbReference>
<dbReference type="HOGENOM" id="CLU_075939_2_1_7"/>
<dbReference type="InParanoid" id="A0LPH1"/>
<dbReference type="Proteomes" id="UP000001784">
    <property type="component" value="Chromosome"/>
</dbReference>
<dbReference type="GO" id="GO:0022625">
    <property type="term" value="C:cytosolic large ribosomal subunit"/>
    <property type="evidence" value="ECO:0007669"/>
    <property type="project" value="TreeGrafter"/>
</dbReference>
<dbReference type="GO" id="GO:0008097">
    <property type="term" value="F:5S rRNA binding"/>
    <property type="evidence" value="ECO:0007669"/>
    <property type="project" value="InterPro"/>
</dbReference>
<dbReference type="GO" id="GO:0003735">
    <property type="term" value="F:structural constituent of ribosome"/>
    <property type="evidence" value="ECO:0007669"/>
    <property type="project" value="InterPro"/>
</dbReference>
<dbReference type="GO" id="GO:0006412">
    <property type="term" value="P:translation"/>
    <property type="evidence" value="ECO:0007669"/>
    <property type="project" value="UniProtKB-UniRule"/>
</dbReference>
<dbReference type="CDD" id="cd00495">
    <property type="entry name" value="Ribosomal_L25_TL5_CTC"/>
    <property type="match status" value="1"/>
</dbReference>
<dbReference type="Gene3D" id="2.170.120.20">
    <property type="entry name" value="Ribosomal protein L25, beta domain"/>
    <property type="match status" value="1"/>
</dbReference>
<dbReference type="Gene3D" id="2.40.240.10">
    <property type="entry name" value="Ribosomal Protein L25, Chain P"/>
    <property type="match status" value="1"/>
</dbReference>
<dbReference type="HAMAP" id="MF_01334">
    <property type="entry name" value="Ribosomal_bL25_CTC"/>
    <property type="match status" value="1"/>
</dbReference>
<dbReference type="InterPro" id="IPR020056">
    <property type="entry name" value="Rbsml_bL25/Gln-tRNA_synth_N"/>
</dbReference>
<dbReference type="InterPro" id="IPR011035">
    <property type="entry name" value="Ribosomal_bL25/Gln-tRNA_synth"/>
</dbReference>
<dbReference type="InterPro" id="IPR020057">
    <property type="entry name" value="Ribosomal_bL25_b-dom"/>
</dbReference>
<dbReference type="InterPro" id="IPR037121">
    <property type="entry name" value="Ribosomal_bL25_C"/>
</dbReference>
<dbReference type="InterPro" id="IPR001021">
    <property type="entry name" value="Ribosomal_bL25_long"/>
</dbReference>
<dbReference type="InterPro" id="IPR029751">
    <property type="entry name" value="Ribosomal_L25_dom"/>
</dbReference>
<dbReference type="InterPro" id="IPR020930">
    <property type="entry name" value="Ribosomal_uL5_bac-type"/>
</dbReference>
<dbReference type="NCBIfam" id="TIGR00731">
    <property type="entry name" value="bL25_bact_ctc"/>
    <property type="match status" value="1"/>
</dbReference>
<dbReference type="NCBIfam" id="NF004139">
    <property type="entry name" value="PRK05618.4-2"/>
    <property type="match status" value="1"/>
</dbReference>
<dbReference type="NCBIfam" id="NF004612">
    <property type="entry name" value="PRK05943.1"/>
    <property type="match status" value="1"/>
</dbReference>
<dbReference type="PANTHER" id="PTHR33284">
    <property type="entry name" value="RIBOSOMAL PROTEIN L25/GLN-TRNA SYNTHETASE, ANTI-CODON-BINDING DOMAIN-CONTAINING PROTEIN"/>
    <property type="match status" value="1"/>
</dbReference>
<dbReference type="PANTHER" id="PTHR33284:SF1">
    <property type="entry name" value="RIBOSOMAL PROTEIN L25_GLN-TRNA SYNTHETASE, ANTI-CODON-BINDING DOMAIN-CONTAINING PROTEIN"/>
    <property type="match status" value="1"/>
</dbReference>
<dbReference type="Pfam" id="PF01386">
    <property type="entry name" value="Ribosomal_L25p"/>
    <property type="match status" value="1"/>
</dbReference>
<dbReference type="Pfam" id="PF14693">
    <property type="entry name" value="Ribosomal_TL5_C"/>
    <property type="match status" value="1"/>
</dbReference>
<dbReference type="SUPFAM" id="SSF50715">
    <property type="entry name" value="Ribosomal protein L25-like"/>
    <property type="match status" value="1"/>
</dbReference>
<sequence length="199" mass="21931">MDIELVAQTRTKSGKGPARALRRNEMVPAVLYGPKAETVSLSVPRQRLERLLRDMGEESKLLRLTVEGDGTAEMKQVLIREVQVHPVRRRFLHVDFYEVPLDHPIVVEVPVELLGEPVGVKKGGTLNLIQRMLSVRCLPGEIPEKVQVDVSKLDIGSSIQVEQLRTIVPFELTDDGGMAVVNVVAPEGAGKEDAEAAEE</sequence>
<keyword id="KW-1185">Reference proteome</keyword>
<keyword id="KW-0687">Ribonucleoprotein</keyword>
<keyword id="KW-0689">Ribosomal protein</keyword>
<keyword id="KW-0694">RNA-binding</keyword>
<keyword id="KW-0699">rRNA-binding</keyword>
<accession>A0LPH1</accession>
<name>RL25_SYNFM</name>
<protein>
    <recommendedName>
        <fullName evidence="1">Large ribosomal subunit protein bL25</fullName>
    </recommendedName>
    <alternativeName>
        <fullName evidence="2">50S ribosomal protein L25</fullName>
    </alternativeName>
    <alternativeName>
        <fullName evidence="1">General stress protein CTC</fullName>
    </alternativeName>
</protein>
<feature type="chain" id="PRO_1000052940" description="Large ribosomal subunit protein bL25">
    <location>
        <begin position="1"/>
        <end position="199"/>
    </location>
</feature>
<proteinExistence type="inferred from homology"/>
<evidence type="ECO:0000255" key="1">
    <source>
        <dbReference type="HAMAP-Rule" id="MF_01334"/>
    </source>
</evidence>
<evidence type="ECO:0000305" key="2"/>
<comment type="function">
    <text evidence="1">This is one of the proteins that binds to the 5S RNA in the ribosome where it forms part of the central protuberance.</text>
</comment>
<comment type="subunit">
    <text evidence="1">Part of the 50S ribosomal subunit; part of the 5S rRNA/L5/L18/L25 subcomplex. Contacts the 5S rRNA. Binds to the 5S rRNA independently of L5 and L18.</text>
</comment>
<comment type="similarity">
    <text evidence="1">Belongs to the bacterial ribosomal protein bL25 family. CTC subfamily.</text>
</comment>
<reference key="1">
    <citation type="submission" date="2006-10" db="EMBL/GenBank/DDBJ databases">
        <title>Complete sequence of Syntrophobacter fumaroxidans MPOB.</title>
        <authorList>
            <consortium name="US DOE Joint Genome Institute"/>
            <person name="Copeland A."/>
            <person name="Lucas S."/>
            <person name="Lapidus A."/>
            <person name="Barry K."/>
            <person name="Detter J.C."/>
            <person name="Glavina del Rio T."/>
            <person name="Hammon N."/>
            <person name="Israni S."/>
            <person name="Pitluck S."/>
            <person name="Goltsman E.G."/>
            <person name="Martinez M."/>
            <person name="Schmutz J."/>
            <person name="Larimer F."/>
            <person name="Land M."/>
            <person name="Hauser L."/>
            <person name="Kyrpides N."/>
            <person name="Kim E."/>
            <person name="Boone D.R."/>
            <person name="Brockman F."/>
            <person name="Culley D."/>
            <person name="Ferry J."/>
            <person name="Gunsalus R."/>
            <person name="McInerney M.J."/>
            <person name="Morrison M."/>
            <person name="Plugge C."/>
            <person name="Rohlin L."/>
            <person name="Scholten J."/>
            <person name="Sieber J."/>
            <person name="Stams A.J.M."/>
            <person name="Worm P."/>
            <person name="Henstra A.M."/>
            <person name="Richardson P."/>
        </authorList>
    </citation>
    <scope>NUCLEOTIDE SEQUENCE [LARGE SCALE GENOMIC DNA]</scope>
    <source>
        <strain>DSM 10017 / MPOB</strain>
    </source>
</reference>
<organism>
    <name type="scientific">Syntrophobacter fumaroxidans (strain DSM 10017 / MPOB)</name>
    <dbReference type="NCBI Taxonomy" id="335543"/>
    <lineage>
        <taxon>Bacteria</taxon>
        <taxon>Pseudomonadati</taxon>
        <taxon>Thermodesulfobacteriota</taxon>
        <taxon>Syntrophobacteria</taxon>
        <taxon>Syntrophobacterales</taxon>
        <taxon>Syntrophobacteraceae</taxon>
        <taxon>Syntrophobacter</taxon>
    </lineage>
</organism>
<gene>
    <name evidence="1" type="primary">rplY</name>
    <name evidence="1" type="synonym">ctc</name>
    <name type="ordered locus">Sfum_3653</name>
</gene>